<organism>
    <name type="scientific">Buchnera aphidicola subsp. Schizaphis graminum (strain Sg)</name>
    <dbReference type="NCBI Taxonomy" id="198804"/>
    <lineage>
        <taxon>Bacteria</taxon>
        <taxon>Pseudomonadati</taxon>
        <taxon>Pseudomonadota</taxon>
        <taxon>Gammaproteobacteria</taxon>
        <taxon>Enterobacterales</taxon>
        <taxon>Erwiniaceae</taxon>
        <taxon>Buchnera</taxon>
    </lineage>
</organism>
<keyword id="KW-0687">Ribonucleoprotein</keyword>
<keyword id="KW-0689">Ribosomal protein</keyword>
<keyword id="KW-0694">RNA-binding</keyword>
<keyword id="KW-0699">rRNA-binding</keyword>
<name>RS4_BUCAP</name>
<comment type="function">
    <text evidence="1">One of the primary rRNA binding proteins, it binds directly to 16S rRNA where it nucleates assembly of the body of the 30S subunit.</text>
</comment>
<comment type="function">
    <text evidence="1">With S5 and S12 plays an important role in translational accuracy.</text>
</comment>
<comment type="subunit">
    <text evidence="1">Part of the 30S ribosomal subunit. Contacts protein S5. The interaction surface between S4 and S5 is involved in control of translational fidelity.</text>
</comment>
<comment type="similarity">
    <text evidence="1">Belongs to the universal ribosomal protein uS4 family.</text>
</comment>
<dbReference type="EMBL" id="M74510">
    <property type="protein sequence ID" value="AAC05398.1"/>
    <property type="molecule type" value="Genomic_DNA"/>
</dbReference>
<dbReference type="EMBL" id="AE013218">
    <property type="protein sequence ID" value="AAM68024.1"/>
    <property type="molecule type" value="Genomic_DNA"/>
</dbReference>
<dbReference type="RefSeq" id="WP_011053990.1">
    <property type="nucleotide sequence ID" value="NC_004061.1"/>
</dbReference>
<dbReference type="SMR" id="P41186"/>
<dbReference type="STRING" id="198804.BUsg_481"/>
<dbReference type="GeneID" id="93003956"/>
<dbReference type="KEGG" id="bas:BUsg_481"/>
<dbReference type="eggNOG" id="COG0522">
    <property type="taxonomic scope" value="Bacteria"/>
</dbReference>
<dbReference type="HOGENOM" id="CLU_092403_0_2_6"/>
<dbReference type="Proteomes" id="UP000000416">
    <property type="component" value="Chromosome"/>
</dbReference>
<dbReference type="GO" id="GO:0015935">
    <property type="term" value="C:small ribosomal subunit"/>
    <property type="evidence" value="ECO:0007669"/>
    <property type="project" value="InterPro"/>
</dbReference>
<dbReference type="GO" id="GO:0019843">
    <property type="term" value="F:rRNA binding"/>
    <property type="evidence" value="ECO:0007669"/>
    <property type="project" value="UniProtKB-UniRule"/>
</dbReference>
<dbReference type="GO" id="GO:0003735">
    <property type="term" value="F:structural constituent of ribosome"/>
    <property type="evidence" value="ECO:0007669"/>
    <property type="project" value="InterPro"/>
</dbReference>
<dbReference type="GO" id="GO:0042274">
    <property type="term" value="P:ribosomal small subunit biogenesis"/>
    <property type="evidence" value="ECO:0007669"/>
    <property type="project" value="TreeGrafter"/>
</dbReference>
<dbReference type="GO" id="GO:0006412">
    <property type="term" value="P:translation"/>
    <property type="evidence" value="ECO:0007669"/>
    <property type="project" value="UniProtKB-UniRule"/>
</dbReference>
<dbReference type="CDD" id="cd00165">
    <property type="entry name" value="S4"/>
    <property type="match status" value="1"/>
</dbReference>
<dbReference type="FunFam" id="1.10.1050.10:FF:000001">
    <property type="entry name" value="30S ribosomal protein S4"/>
    <property type="match status" value="1"/>
</dbReference>
<dbReference type="FunFam" id="3.10.290.10:FF:000001">
    <property type="entry name" value="30S ribosomal protein S4"/>
    <property type="match status" value="1"/>
</dbReference>
<dbReference type="Gene3D" id="1.10.1050.10">
    <property type="entry name" value="Ribosomal Protein S4 Delta 41, Chain A, domain 1"/>
    <property type="match status" value="1"/>
</dbReference>
<dbReference type="Gene3D" id="3.10.290.10">
    <property type="entry name" value="RNA-binding S4 domain"/>
    <property type="match status" value="1"/>
</dbReference>
<dbReference type="HAMAP" id="MF_01306_B">
    <property type="entry name" value="Ribosomal_uS4_B"/>
    <property type="match status" value="1"/>
</dbReference>
<dbReference type="InterPro" id="IPR022801">
    <property type="entry name" value="Ribosomal_uS4"/>
</dbReference>
<dbReference type="InterPro" id="IPR005709">
    <property type="entry name" value="Ribosomal_uS4_bac-type"/>
</dbReference>
<dbReference type="InterPro" id="IPR018079">
    <property type="entry name" value="Ribosomal_uS4_CS"/>
</dbReference>
<dbReference type="InterPro" id="IPR001912">
    <property type="entry name" value="Ribosomal_uS4_N"/>
</dbReference>
<dbReference type="InterPro" id="IPR002942">
    <property type="entry name" value="S4_RNA-bd"/>
</dbReference>
<dbReference type="InterPro" id="IPR036986">
    <property type="entry name" value="S4_RNA-bd_sf"/>
</dbReference>
<dbReference type="NCBIfam" id="NF003717">
    <property type="entry name" value="PRK05327.1"/>
    <property type="match status" value="1"/>
</dbReference>
<dbReference type="NCBIfam" id="TIGR01017">
    <property type="entry name" value="rpsD_bact"/>
    <property type="match status" value="1"/>
</dbReference>
<dbReference type="PANTHER" id="PTHR11831">
    <property type="entry name" value="30S 40S RIBOSOMAL PROTEIN"/>
    <property type="match status" value="1"/>
</dbReference>
<dbReference type="PANTHER" id="PTHR11831:SF4">
    <property type="entry name" value="SMALL RIBOSOMAL SUBUNIT PROTEIN US4M"/>
    <property type="match status" value="1"/>
</dbReference>
<dbReference type="Pfam" id="PF00163">
    <property type="entry name" value="Ribosomal_S4"/>
    <property type="match status" value="1"/>
</dbReference>
<dbReference type="Pfam" id="PF01479">
    <property type="entry name" value="S4"/>
    <property type="match status" value="1"/>
</dbReference>
<dbReference type="SMART" id="SM01390">
    <property type="entry name" value="Ribosomal_S4"/>
    <property type="match status" value="1"/>
</dbReference>
<dbReference type="SMART" id="SM00363">
    <property type="entry name" value="S4"/>
    <property type="match status" value="1"/>
</dbReference>
<dbReference type="SUPFAM" id="SSF55174">
    <property type="entry name" value="Alpha-L RNA-binding motif"/>
    <property type="match status" value="1"/>
</dbReference>
<dbReference type="PROSITE" id="PS00632">
    <property type="entry name" value="RIBOSOMAL_S4"/>
    <property type="match status" value="1"/>
</dbReference>
<dbReference type="PROSITE" id="PS50889">
    <property type="entry name" value="S4"/>
    <property type="match status" value="1"/>
</dbReference>
<feature type="chain" id="PRO_0000132354" description="Small ribosomal subunit protein uS4">
    <location>
        <begin position="1"/>
        <end position="206"/>
    </location>
</feature>
<feature type="domain" description="S4 RNA-binding" evidence="1">
    <location>
        <begin position="96"/>
        <end position="156"/>
    </location>
</feature>
<feature type="sequence conflict" description="In Ref. 1; AAC05398." evidence="2" ref="1">
    <original>I</original>
    <variation>Y</variation>
    <location>
        <position position="53"/>
    </location>
</feature>
<feature type="sequence conflict" description="In Ref. 1; AAC05398." evidence="2" ref="1">
    <original>N</original>
    <variation>D</variation>
    <location>
        <position position="174"/>
    </location>
</feature>
<evidence type="ECO:0000255" key="1">
    <source>
        <dbReference type="HAMAP-Rule" id="MF_01306"/>
    </source>
</evidence>
<evidence type="ECO:0000305" key="2"/>
<gene>
    <name evidence="1" type="primary">rpsD</name>
    <name type="ordered locus">BUsg_481</name>
</gene>
<sequence>MARYLGPKLKLSRREGTDLFLKSGFRSIDSKCKLEHPPGQHGVRKPRLSDYAIQLREKQKVRRLYGVLERQFRIYYKKASRSKGNTGENLLQLLERRLDNVVYRMGFGCTRSESRQLISHKSIKVNNNIVNIASYQISPNDRISVRDKSKNQSRIKAALELTEQREKLMWIEVNVTKMEGIFKRFPERSDLSAEINEHLIVELYSK</sequence>
<proteinExistence type="inferred from homology"/>
<reference key="1">
    <citation type="journal article" date="1992" name="Curr. Microbiol.">
        <title>Buchnera aphidicola, the endosymbiont of aphids, contains genes for four ribosomal RNA proteins, initiation factor-3, and the alpha subunit of RNA polymerase.</title>
        <authorList>
            <person name="Munson M.A."/>
            <person name="Baumann L."/>
            <person name="Baumann P."/>
        </authorList>
    </citation>
    <scope>NUCLEOTIDE SEQUENCE [GENOMIC DNA]</scope>
</reference>
<reference key="2">
    <citation type="journal article" date="2002" name="Science">
        <title>50 million years of genomic stasis in endosymbiotic bacteria.</title>
        <authorList>
            <person name="Tamas I."/>
            <person name="Klasson L."/>
            <person name="Canbaeck B."/>
            <person name="Naeslund A.K."/>
            <person name="Eriksson A.-S."/>
            <person name="Wernegreen J.J."/>
            <person name="Sandstroem J.P."/>
            <person name="Moran N.A."/>
            <person name="Andersson S.G.E."/>
        </authorList>
    </citation>
    <scope>NUCLEOTIDE SEQUENCE [LARGE SCALE GENOMIC DNA]</scope>
    <source>
        <strain>Sg</strain>
    </source>
</reference>
<protein>
    <recommendedName>
        <fullName evidence="1">Small ribosomal subunit protein uS4</fullName>
    </recommendedName>
    <alternativeName>
        <fullName evidence="2">30S ribosomal protein S4</fullName>
    </alternativeName>
</protein>
<accession>P41186</accession>